<reference key="1">
    <citation type="journal article" date="2008" name="Antimicrob. Agents Chemother.">
        <title>Whole-genome pyrosequencing of an epidemic multidrug-resistant Acinetobacter baumannii strain belonging to the European clone II group.</title>
        <authorList>
            <person name="Iacono M."/>
            <person name="Villa L."/>
            <person name="Fortini D."/>
            <person name="Bordoni R."/>
            <person name="Imperi F."/>
            <person name="Bonnal R.J."/>
            <person name="Sicheritz-Ponten T."/>
            <person name="De Bellis G."/>
            <person name="Visca P."/>
            <person name="Cassone A."/>
            <person name="Carattoli A."/>
        </authorList>
    </citation>
    <scope>NUCLEOTIDE SEQUENCE [LARGE SCALE GENOMIC DNA]</scope>
    <source>
        <strain>ACICU</strain>
    </source>
</reference>
<comment type="function">
    <text evidence="1">Catalyzes the conversion of 4-hydroxy-tetrahydrodipicolinate (HTPA) to tetrahydrodipicolinate.</text>
</comment>
<comment type="catalytic activity">
    <reaction evidence="1">
        <text>(S)-2,3,4,5-tetrahydrodipicolinate + NAD(+) + H2O = (2S,4S)-4-hydroxy-2,3,4,5-tetrahydrodipicolinate + NADH + H(+)</text>
        <dbReference type="Rhea" id="RHEA:35323"/>
        <dbReference type="ChEBI" id="CHEBI:15377"/>
        <dbReference type="ChEBI" id="CHEBI:15378"/>
        <dbReference type="ChEBI" id="CHEBI:16845"/>
        <dbReference type="ChEBI" id="CHEBI:57540"/>
        <dbReference type="ChEBI" id="CHEBI:57945"/>
        <dbReference type="ChEBI" id="CHEBI:67139"/>
        <dbReference type="EC" id="1.17.1.8"/>
    </reaction>
</comment>
<comment type="catalytic activity">
    <reaction evidence="1">
        <text>(S)-2,3,4,5-tetrahydrodipicolinate + NADP(+) + H2O = (2S,4S)-4-hydroxy-2,3,4,5-tetrahydrodipicolinate + NADPH + H(+)</text>
        <dbReference type="Rhea" id="RHEA:35331"/>
        <dbReference type="ChEBI" id="CHEBI:15377"/>
        <dbReference type="ChEBI" id="CHEBI:15378"/>
        <dbReference type="ChEBI" id="CHEBI:16845"/>
        <dbReference type="ChEBI" id="CHEBI:57783"/>
        <dbReference type="ChEBI" id="CHEBI:58349"/>
        <dbReference type="ChEBI" id="CHEBI:67139"/>
        <dbReference type="EC" id="1.17.1.8"/>
    </reaction>
</comment>
<comment type="pathway">
    <text evidence="1">Amino-acid biosynthesis; L-lysine biosynthesis via DAP pathway; (S)-tetrahydrodipicolinate from L-aspartate: step 4/4.</text>
</comment>
<comment type="subcellular location">
    <subcellularLocation>
        <location evidence="1">Cytoplasm</location>
    </subcellularLocation>
</comment>
<comment type="similarity">
    <text evidence="1">Belongs to the DapB family.</text>
</comment>
<comment type="caution">
    <text evidence="2">Was originally thought to be a dihydrodipicolinate reductase (DHDPR), catalyzing the conversion of dihydrodipicolinate to tetrahydrodipicolinate. However, it was shown in E.coli that the substrate of the enzymatic reaction is not dihydrodipicolinate (DHDP) but in fact (2S,4S)-4-hydroxy-2,3,4,5-tetrahydrodipicolinic acid (HTPA), the product released by the DapA-catalyzed reaction.</text>
</comment>
<accession>B2I2G4</accession>
<feature type="chain" id="PRO_1000093934" description="4-hydroxy-tetrahydrodipicolinate reductase">
    <location>
        <begin position="1"/>
        <end position="273"/>
    </location>
</feature>
<feature type="active site" description="Proton donor/acceptor" evidence="1">
    <location>
        <position position="157"/>
    </location>
</feature>
<feature type="active site" description="Proton donor" evidence="1">
    <location>
        <position position="161"/>
    </location>
</feature>
<feature type="binding site" evidence="1">
    <location>
        <begin position="11"/>
        <end position="16"/>
    </location>
    <ligand>
        <name>NAD(+)</name>
        <dbReference type="ChEBI" id="CHEBI:57540"/>
    </ligand>
</feature>
<feature type="binding site" evidence="1">
    <location>
        <position position="36"/>
    </location>
    <ligand>
        <name>NAD(+)</name>
        <dbReference type="ChEBI" id="CHEBI:57540"/>
    </ligand>
</feature>
<feature type="binding site" evidence="1">
    <location>
        <position position="37"/>
    </location>
    <ligand>
        <name>NADP(+)</name>
        <dbReference type="ChEBI" id="CHEBI:58349"/>
    </ligand>
</feature>
<feature type="binding site" evidence="1">
    <location>
        <begin position="100"/>
        <end position="102"/>
    </location>
    <ligand>
        <name>NAD(+)</name>
        <dbReference type="ChEBI" id="CHEBI:57540"/>
    </ligand>
</feature>
<feature type="binding site" evidence="1">
    <location>
        <begin position="124"/>
        <end position="127"/>
    </location>
    <ligand>
        <name>NAD(+)</name>
        <dbReference type="ChEBI" id="CHEBI:57540"/>
    </ligand>
</feature>
<feature type="binding site" evidence="1">
    <location>
        <position position="158"/>
    </location>
    <ligand>
        <name>(S)-2,3,4,5-tetrahydrodipicolinate</name>
        <dbReference type="ChEBI" id="CHEBI:16845"/>
    </ligand>
</feature>
<feature type="binding site" evidence="1">
    <location>
        <begin position="167"/>
        <end position="168"/>
    </location>
    <ligand>
        <name>(S)-2,3,4,5-tetrahydrodipicolinate</name>
        <dbReference type="ChEBI" id="CHEBI:16845"/>
    </ligand>
</feature>
<gene>
    <name evidence="1" type="primary">dapB</name>
    <name type="ordered locus">ACICU_03642</name>
</gene>
<keyword id="KW-0028">Amino-acid biosynthesis</keyword>
<keyword id="KW-0963">Cytoplasm</keyword>
<keyword id="KW-0220">Diaminopimelate biosynthesis</keyword>
<keyword id="KW-0457">Lysine biosynthesis</keyword>
<keyword id="KW-0520">NAD</keyword>
<keyword id="KW-0521">NADP</keyword>
<keyword id="KW-0560">Oxidoreductase</keyword>
<sequence>MSAAPRIGILGAGGRMGRTLIQAVQQAGYQLAAAVERPESSLVGTDAGELAGIGSVGVKVSGSLADVLKDCDVIIDFTAPAATAQHLKLCREAGVAMVIGTTGMSDEQKAELDEAATHTPVVYAANYSVGVNVSIKLLELAAKVFGDTVDIEVIEAHHRHKVDAPSGTALMMGEAIADTLGRNLKEVAVYGREGHTGPRDRQTIGFETIRGGDIVGEHTVMFIGEGERVEVTHKATNRMNFAAGAVRAAAWVVGREARKYDMKDVLGLNDVQV</sequence>
<name>DAPB_ACIBC</name>
<proteinExistence type="inferred from homology"/>
<protein>
    <recommendedName>
        <fullName evidence="1">4-hydroxy-tetrahydrodipicolinate reductase</fullName>
        <shortName evidence="1">HTPA reductase</shortName>
        <ecNumber evidence="1">1.17.1.8</ecNumber>
    </recommendedName>
</protein>
<dbReference type="EC" id="1.17.1.8" evidence="1"/>
<dbReference type="EMBL" id="CP000863">
    <property type="protein sequence ID" value="ACC58951.1"/>
    <property type="molecule type" value="Genomic_DNA"/>
</dbReference>
<dbReference type="RefSeq" id="WP_001271389.1">
    <property type="nucleotide sequence ID" value="NZ_CP031380.1"/>
</dbReference>
<dbReference type="SMR" id="B2I2G4"/>
<dbReference type="KEGG" id="abc:ACICU_03642"/>
<dbReference type="HOGENOM" id="CLU_047479_2_1_6"/>
<dbReference type="UniPathway" id="UPA00034">
    <property type="reaction ID" value="UER00018"/>
</dbReference>
<dbReference type="Proteomes" id="UP000008839">
    <property type="component" value="Chromosome"/>
</dbReference>
<dbReference type="GO" id="GO:0005829">
    <property type="term" value="C:cytosol"/>
    <property type="evidence" value="ECO:0007669"/>
    <property type="project" value="TreeGrafter"/>
</dbReference>
<dbReference type="GO" id="GO:0008839">
    <property type="term" value="F:4-hydroxy-tetrahydrodipicolinate reductase"/>
    <property type="evidence" value="ECO:0007669"/>
    <property type="project" value="UniProtKB-EC"/>
</dbReference>
<dbReference type="GO" id="GO:0051287">
    <property type="term" value="F:NAD binding"/>
    <property type="evidence" value="ECO:0007669"/>
    <property type="project" value="UniProtKB-UniRule"/>
</dbReference>
<dbReference type="GO" id="GO:0050661">
    <property type="term" value="F:NADP binding"/>
    <property type="evidence" value="ECO:0007669"/>
    <property type="project" value="UniProtKB-UniRule"/>
</dbReference>
<dbReference type="GO" id="GO:0016726">
    <property type="term" value="F:oxidoreductase activity, acting on CH or CH2 groups, NAD or NADP as acceptor"/>
    <property type="evidence" value="ECO:0007669"/>
    <property type="project" value="UniProtKB-UniRule"/>
</dbReference>
<dbReference type="GO" id="GO:0019877">
    <property type="term" value="P:diaminopimelate biosynthetic process"/>
    <property type="evidence" value="ECO:0007669"/>
    <property type="project" value="UniProtKB-UniRule"/>
</dbReference>
<dbReference type="GO" id="GO:0009089">
    <property type="term" value="P:lysine biosynthetic process via diaminopimelate"/>
    <property type="evidence" value="ECO:0007669"/>
    <property type="project" value="UniProtKB-UniRule"/>
</dbReference>
<dbReference type="CDD" id="cd02274">
    <property type="entry name" value="DHDPR_N"/>
    <property type="match status" value="1"/>
</dbReference>
<dbReference type="FunFam" id="3.30.360.10:FF:000004">
    <property type="entry name" value="4-hydroxy-tetrahydrodipicolinate reductase"/>
    <property type="match status" value="1"/>
</dbReference>
<dbReference type="FunFam" id="3.40.50.720:FF:000048">
    <property type="entry name" value="4-hydroxy-tetrahydrodipicolinate reductase"/>
    <property type="match status" value="1"/>
</dbReference>
<dbReference type="Gene3D" id="3.30.360.10">
    <property type="entry name" value="Dihydrodipicolinate Reductase, domain 2"/>
    <property type="match status" value="1"/>
</dbReference>
<dbReference type="Gene3D" id="3.40.50.720">
    <property type="entry name" value="NAD(P)-binding Rossmann-like Domain"/>
    <property type="match status" value="1"/>
</dbReference>
<dbReference type="HAMAP" id="MF_00102">
    <property type="entry name" value="DapB"/>
    <property type="match status" value="1"/>
</dbReference>
<dbReference type="InterPro" id="IPR022663">
    <property type="entry name" value="DapB_C"/>
</dbReference>
<dbReference type="InterPro" id="IPR000846">
    <property type="entry name" value="DapB_N"/>
</dbReference>
<dbReference type="InterPro" id="IPR022664">
    <property type="entry name" value="DapB_N_CS"/>
</dbReference>
<dbReference type="InterPro" id="IPR023940">
    <property type="entry name" value="DHDPR_bac"/>
</dbReference>
<dbReference type="InterPro" id="IPR036291">
    <property type="entry name" value="NAD(P)-bd_dom_sf"/>
</dbReference>
<dbReference type="NCBIfam" id="TIGR00036">
    <property type="entry name" value="dapB"/>
    <property type="match status" value="1"/>
</dbReference>
<dbReference type="PANTHER" id="PTHR20836:SF0">
    <property type="entry name" value="4-HYDROXY-TETRAHYDRODIPICOLINATE REDUCTASE 1, CHLOROPLASTIC-RELATED"/>
    <property type="match status" value="1"/>
</dbReference>
<dbReference type="PANTHER" id="PTHR20836">
    <property type="entry name" value="DIHYDRODIPICOLINATE REDUCTASE"/>
    <property type="match status" value="1"/>
</dbReference>
<dbReference type="Pfam" id="PF05173">
    <property type="entry name" value="DapB_C"/>
    <property type="match status" value="1"/>
</dbReference>
<dbReference type="Pfam" id="PF01113">
    <property type="entry name" value="DapB_N"/>
    <property type="match status" value="1"/>
</dbReference>
<dbReference type="PIRSF" id="PIRSF000161">
    <property type="entry name" value="DHPR"/>
    <property type="match status" value="1"/>
</dbReference>
<dbReference type="SUPFAM" id="SSF55347">
    <property type="entry name" value="Glyceraldehyde-3-phosphate dehydrogenase-like, C-terminal domain"/>
    <property type="match status" value="1"/>
</dbReference>
<dbReference type="SUPFAM" id="SSF51735">
    <property type="entry name" value="NAD(P)-binding Rossmann-fold domains"/>
    <property type="match status" value="1"/>
</dbReference>
<dbReference type="PROSITE" id="PS01298">
    <property type="entry name" value="DAPB"/>
    <property type="match status" value="1"/>
</dbReference>
<organism>
    <name type="scientific">Acinetobacter baumannii (strain ACICU)</name>
    <dbReference type="NCBI Taxonomy" id="405416"/>
    <lineage>
        <taxon>Bacteria</taxon>
        <taxon>Pseudomonadati</taxon>
        <taxon>Pseudomonadota</taxon>
        <taxon>Gammaproteobacteria</taxon>
        <taxon>Moraxellales</taxon>
        <taxon>Moraxellaceae</taxon>
        <taxon>Acinetobacter</taxon>
        <taxon>Acinetobacter calcoaceticus/baumannii complex</taxon>
    </lineage>
</organism>
<evidence type="ECO:0000255" key="1">
    <source>
        <dbReference type="HAMAP-Rule" id="MF_00102"/>
    </source>
</evidence>
<evidence type="ECO:0000305" key="2"/>